<keyword id="KW-0560">Oxidoreductase</keyword>
<keyword id="KW-0819">tRNA processing</keyword>
<organism>
    <name type="scientific">Burkholderia orbicola (strain MC0-3)</name>
    <dbReference type="NCBI Taxonomy" id="406425"/>
    <lineage>
        <taxon>Bacteria</taxon>
        <taxon>Pseudomonadati</taxon>
        <taxon>Pseudomonadota</taxon>
        <taxon>Betaproteobacteria</taxon>
        <taxon>Burkholderiales</taxon>
        <taxon>Burkholderiaceae</taxon>
        <taxon>Burkholderia</taxon>
        <taxon>Burkholderia cepacia complex</taxon>
        <taxon>Burkholderia orbicola</taxon>
    </lineage>
</organism>
<protein>
    <recommendedName>
        <fullName evidence="1">tRNA uridine(34) hydroxylase</fullName>
        <ecNumber evidence="1">1.14.-.-</ecNumber>
    </recommendedName>
    <alternativeName>
        <fullName evidence="1">tRNA hydroxylation protein O</fullName>
    </alternativeName>
</protein>
<proteinExistence type="inferred from homology"/>
<gene>
    <name evidence="1" type="primary">trhO</name>
    <name type="ordered locus">Bcenmc03_2337</name>
</gene>
<dbReference type="EC" id="1.14.-.-" evidence="1"/>
<dbReference type="EMBL" id="CP000958">
    <property type="protein sequence ID" value="ACA91498.1"/>
    <property type="molecule type" value="Genomic_DNA"/>
</dbReference>
<dbReference type="RefSeq" id="WP_012328939.1">
    <property type="nucleotide sequence ID" value="NC_010508.1"/>
</dbReference>
<dbReference type="SMR" id="B1JW61"/>
<dbReference type="GeneID" id="83049126"/>
<dbReference type="KEGG" id="bcm:Bcenmc03_2337"/>
<dbReference type="HOGENOM" id="CLU_038878_0_1_4"/>
<dbReference type="Proteomes" id="UP000002169">
    <property type="component" value="Chromosome 1"/>
</dbReference>
<dbReference type="GO" id="GO:0016705">
    <property type="term" value="F:oxidoreductase activity, acting on paired donors, with incorporation or reduction of molecular oxygen"/>
    <property type="evidence" value="ECO:0007669"/>
    <property type="project" value="UniProtKB-UniRule"/>
</dbReference>
<dbReference type="GO" id="GO:0006400">
    <property type="term" value="P:tRNA modification"/>
    <property type="evidence" value="ECO:0007669"/>
    <property type="project" value="UniProtKB-UniRule"/>
</dbReference>
<dbReference type="CDD" id="cd01518">
    <property type="entry name" value="RHOD_YceA"/>
    <property type="match status" value="1"/>
</dbReference>
<dbReference type="Gene3D" id="3.30.70.100">
    <property type="match status" value="1"/>
</dbReference>
<dbReference type="Gene3D" id="3.40.250.10">
    <property type="entry name" value="Rhodanese-like domain"/>
    <property type="match status" value="1"/>
</dbReference>
<dbReference type="HAMAP" id="MF_00469">
    <property type="entry name" value="TrhO"/>
    <property type="match status" value="1"/>
</dbReference>
<dbReference type="InterPro" id="IPR001763">
    <property type="entry name" value="Rhodanese-like_dom"/>
</dbReference>
<dbReference type="InterPro" id="IPR036873">
    <property type="entry name" value="Rhodanese-like_dom_sf"/>
</dbReference>
<dbReference type="InterPro" id="IPR020936">
    <property type="entry name" value="TrhO"/>
</dbReference>
<dbReference type="InterPro" id="IPR040503">
    <property type="entry name" value="TRHO_N"/>
</dbReference>
<dbReference type="NCBIfam" id="NF003703">
    <property type="entry name" value="PRK05320.1"/>
    <property type="match status" value="1"/>
</dbReference>
<dbReference type="PANTHER" id="PTHR43268:SF3">
    <property type="entry name" value="RHODANESE-LIKE DOMAIN-CONTAINING PROTEIN 7-RELATED"/>
    <property type="match status" value="1"/>
</dbReference>
<dbReference type="PANTHER" id="PTHR43268">
    <property type="entry name" value="THIOSULFATE SULFURTRANSFERASE/RHODANESE-LIKE DOMAIN-CONTAINING PROTEIN 2"/>
    <property type="match status" value="1"/>
</dbReference>
<dbReference type="Pfam" id="PF00581">
    <property type="entry name" value="Rhodanese"/>
    <property type="match status" value="1"/>
</dbReference>
<dbReference type="Pfam" id="PF17773">
    <property type="entry name" value="UPF0176_N"/>
    <property type="match status" value="1"/>
</dbReference>
<dbReference type="SMART" id="SM00450">
    <property type="entry name" value="RHOD"/>
    <property type="match status" value="1"/>
</dbReference>
<dbReference type="SUPFAM" id="SSF52821">
    <property type="entry name" value="Rhodanese/Cell cycle control phosphatase"/>
    <property type="match status" value="1"/>
</dbReference>
<dbReference type="PROSITE" id="PS50206">
    <property type="entry name" value="RHODANESE_3"/>
    <property type="match status" value="1"/>
</dbReference>
<name>TRHO_BURO0</name>
<sequence>MTIVNLAAYHFVSLDANEQWRPLVTARCNELGLRGTILLAPEGINLFIAGTREATDAFIAYIRHDPLFEGKFATLQFKESLSDSQPFRRMLVRLKREIITMKKPAIKPELGRAPFVDARTLKAWLDRGHDDAGRPVVMLDTRNAFEVDVGTFDNALDYRIDKFSEFPEVIDANRADLEGKTVVSFCTGGIRCEKAAIHMKEIGIDNVYQLEGGILKYFEEVGGAHYHGDCFVFDYRTALNPQLQPTENVTCFACRAVVTPEAQQSPSYVPGKSCPACAQAASAA</sequence>
<accession>B1JW61</accession>
<feature type="chain" id="PRO_1000200345" description="tRNA uridine(34) hydroxylase">
    <location>
        <begin position="1"/>
        <end position="284"/>
    </location>
</feature>
<feature type="domain" description="Rhodanese" evidence="1">
    <location>
        <begin position="132"/>
        <end position="226"/>
    </location>
</feature>
<feature type="active site" description="Cysteine persulfide intermediate" evidence="1">
    <location>
        <position position="186"/>
    </location>
</feature>
<comment type="function">
    <text evidence="1">Catalyzes oxygen-dependent 5-hydroxyuridine (ho5U) modification at position 34 in tRNAs.</text>
</comment>
<comment type="catalytic activity">
    <reaction evidence="1">
        <text>uridine(34) in tRNA + AH2 + O2 = 5-hydroxyuridine(34) in tRNA + A + H2O</text>
        <dbReference type="Rhea" id="RHEA:64224"/>
        <dbReference type="Rhea" id="RHEA-COMP:11727"/>
        <dbReference type="Rhea" id="RHEA-COMP:13381"/>
        <dbReference type="ChEBI" id="CHEBI:13193"/>
        <dbReference type="ChEBI" id="CHEBI:15377"/>
        <dbReference type="ChEBI" id="CHEBI:15379"/>
        <dbReference type="ChEBI" id="CHEBI:17499"/>
        <dbReference type="ChEBI" id="CHEBI:65315"/>
        <dbReference type="ChEBI" id="CHEBI:136877"/>
    </reaction>
</comment>
<comment type="similarity">
    <text evidence="1">Belongs to the TrhO family.</text>
</comment>
<evidence type="ECO:0000255" key="1">
    <source>
        <dbReference type="HAMAP-Rule" id="MF_00469"/>
    </source>
</evidence>
<reference key="1">
    <citation type="submission" date="2008-02" db="EMBL/GenBank/DDBJ databases">
        <title>Complete sequence of chromosome 1 of Burkholderia cenocepacia MC0-3.</title>
        <authorList>
            <person name="Copeland A."/>
            <person name="Lucas S."/>
            <person name="Lapidus A."/>
            <person name="Barry K."/>
            <person name="Bruce D."/>
            <person name="Goodwin L."/>
            <person name="Glavina del Rio T."/>
            <person name="Dalin E."/>
            <person name="Tice H."/>
            <person name="Pitluck S."/>
            <person name="Chain P."/>
            <person name="Malfatti S."/>
            <person name="Shin M."/>
            <person name="Vergez L."/>
            <person name="Schmutz J."/>
            <person name="Larimer F."/>
            <person name="Land M."/>
            <person name="Hauser L."/>
            <person name="Kyrpides N."/>
            <person name="Mikhailova N."/>
            <person name="Tiedje J."/>
            <person name="Richardson P."/>
        </authorList>
    </citation>
    <scope>NUCLEOTIDE SEQUENCE [LARGE SCALE GENOMIC DNA]</scope>
    <source>
        <strain>MC0-3</strain>
    </source>
</reference>